<sequence>MTEEPKPVTPVLRDGEAGLDTTAPTEAGSLGEEAPKKEADGIVDVPDAEQQKQEAPQQGFSAYVKLWAWCEPIDVVLRICGFFAAVASGTALPLMTIIFGKFVNIFNDFGVGKISGDDFRAQISKNALWFVYLFIGKFALVYIHTICFNITAIRSVRKLRLQYIRAILRQEMAYFDTYTPGSVATRISNNANLIQTGMSEKVGTCCQGVAMLISAFVVAFTQSWRLTLPVATSIPTAVTLVGITVALDAKLEAKILDIYSKAGGLVEETLGSIRVVVAFGAGDRLSKKYDNHLEAAKGFGVKKGPVLGIQYSSEFFIMYCAYALAFWYGIKLLLQGKIGSGGDILTVLFSIVIGTSSLTMIAPTLGEFTKAGAAANDVLNMINRVPEIDSLSAEGLKPSSVKGDLELSNAVFSYPARPTIRVLDGVNLKIPARKVTALVGASGSGKSTIIGLLERWYDPASGSITLDGVDIKDLNVGWLRRQIGLVQQEPVLFNDTIYTNVLYGLPPDEIAQMDEEKKRELVRQACIESNADDFIQGFPKGYDTIVGERGSLLSGGQRQRVAIARSIISNPPILLLDEATSALDPTAEAIVQAALDKVSQSRTTVLIAHKLSTVKKADNIIVMNKGQVIEQGTHESLLDTKGQYWSLVNAQSLSLASDDSSSDTDKETDTQPAEILEKHATTKSTHSKVPHEVAAESEDVARKFSLFKCLLIIFYEQRRHWLFFLLGGIASVVSGGAFPAQAILFSRIVTTFQLPRDQWQEKGDFWALMFFVLALCILLTYASIGFFLTVAAFRSSKFYRSEYFKAMISQDIAYFDKPANSSGSLTARLSTDPQNLQDLLSSNIGLILIVIVSLLAVSLLALVTGWKLALVSLFGCLPPLFLAGFIRMRMEMQAQDKNAKLYLESARFASEAVNSIRTVSSLTLESTVYNNYGDRLKRPVARSLKYTAIAMIFFGFSDSVDTAAMALAFWYGGRLMSYGEYDAQQFFVIFIAVIFGGQAAGFIFGFTMNTTKAHAAANHIIHLRGQVAPINGSTGEEPASTEDSDVAVEFRNVSFSYPTRPDQPVLRKINLNIRHGQNVGLVGPSGCGKTTMIALLERFYDVTSGDILINGKPLTDIDVTKYRETASLVSQETTLYQGTIRENILLGVTRDVPDEEIHQACKDANIHDFIISLPEGYNTEAGSRGLSFSGGQRQRLATARALLRNPDFLFLDEATSALDTESERVVQAALEHAKRGRTTIAVAHRLSTVQDCDAIFVLEAGKIVEQGTHQELLRRKGRYFEMCKAQSLDREA</sequence>
<keyword id="KW-0067">ATP-binding</keyword>
<keyword id="KW-1003">Cell membrane</keyword>
<keyword id="KW-0325">Glycoprotein</keyword>
<keyword id="KW-0472">Membrane</keyword>
<keyword id="KW-0547">Nucleotide-binding</keyword>
<keyword id="KW-1185">Reference proteome</keyword>
<keyword id="KW-0812">Transmembrane</keyword>
<keyword id="KW-1133">Transmembrane helix</keyword>
<keyword id="KW-0813">Transport</keyword>
<protein>
    <recommendedName>
        <fullName evidence="7">ABC multidrug transporter MDR5</fullName>
    </recommendedName>
    <alternativeName>
        <fullName evidence="7">Multidrug resistance protein 5</fullName>
    </alternativeName>
</protein>
<comment type="function">
    <text evidence="6">Pleiotropic ABC efflux transporter involved in the modulation susceptibility to itraconazole.</text>
</comment>
<comment type="catalytic activity">
    <reaction evidence="6">
        <text>itraconazole(in) + ATP + H2O = itraconazole(out) + ADP + phosphate + H(+)</text>
        <dbReference type="Rhea" id="RHEA:33503"/>
        <dbReference type="ChEBI" id="CHEBI:6076"/>
        <dbReference type="ChEBI" id="CHEBI:15377"/>
        <dbReference type="ChEBI" id="CHEBI:15378"/>
        <dbReference type="ChEBI" id="CHEBI:30616"/>
        <dbReference type="ChEBI" id="CHEBI:43474"/>
        <dbReference type="ChEBI" id="CHEBI:456216"/>
    </reaction>
    <physiologicalReaction direction="left-to-right" evidence="6">
        <dbReference type="Rhea" id="RHEA:33504"/>
    </physiologicalReaction>
</comment>
<comment type="subcellular location">
    <subcellularLocation>
        <location evidence="9">Cell membrane</location>
        <topology evidence="1">Multi-pass membrane protein</topology>
    </subcellularLocation>
</comment>
<comment type="induction">
    <text evidence="6">Is slightly over-expressed in strain TIMM20092, and azole-resistant strain isolated in Switzerland.</text>
</comment>
<comment type="similarity">
    <text evidence="8">Belongs to the ABC transporter superfamily. ABCB family. Multidrug resistance exporter (TC 3.A.1.201) subfamily.</text>
</comment>
<comment type="sequence caution" evidence="6">
    <conflict type="erroneous gene model prediction">
        <sequence resource="EMBL-CDS" id="EGD88706"/>
    </conflict>
</comment>
<gene>
    <name evidence="7" type="primary">MDR5</name>
    <name type="ORF">TERG_04952</name>
</gene>
<evidence type="ECO:0000255" key="1"/>
<evidence type="ECO:0000255" key="2">
    <source>
        <dbReference type="PROSITE-ProRule" id="PRU00434"/>
    </source>
</evidence>
<evidence type="ECO:0000255" key="3">
    <source>
        <dbReference type="PROSITE-ProRule" id="PRU00441"/>
    </source>
</evidence>
<evidence type="ECO:0000255" key="4">
    <source>
        <dbReference type="PROSITE-ProRule" id="PRU00498"/>
    </source>
</evidence>
<evidence type="ECO:0000256" key="5">
    <source>
        <dbReference type="SAM" id="MobiDB-lite"/>
    </source>
</evidence>
<evidence type="ECO:0000269" key="6">
    <source>
    </source>
</evidence>
<evidence type="ECO:0000303" key="7">
    <source>
    </source>
</evidence>
<evidence type="ECO:0000305" key="8"/>
<evidence type="ECO:0000305" key="9">
    <source>
    </source>
</evidence>
<dbReference type="EMBL" id="GG700652">
    <property type="protein sequence ID" value="EGD88706.2"/>
    <property type="status" value="ALT_SEQ"/>
    <property type="molecule type" value="Genomic_DNA"/>
</dbReference>
<dbReference type="RefSeq" id="XP_003234359.1">
    <property type="nucleotide sequence ID" value="XM_003234311.1"/>
</dbReference>
<dbReference type="SMR" id="F2SQT8"/>
<dbReference type="STRING" id="559305.F2SQT8"/>
<dbReference type="GlyCosmos" id="F2SQT8">
    <property type="glycosylation" value="6 sites, No reported glycans"/>
</dbReference>
<dbReference type="GeneID" id="10372913"/>
<dbReference type="eggNOG" id="KOG0055">
    <property type="taxonomic scope" value="Eukaryota"/>
</dbReference>
<dbReference type="HOGENOM" id="CLU_000604_17_8_1"/>
<dbReference type="InParanoid" id="F2SQT8"/>
<dbReference type="OrthoDB" id="6500128at2759"/>
<dbReference type="Proteomes" id="UP000008864">
    <property type="component" value="Unassembled WGS sequence"/>
</dbReference>
<dbReference type="GO" id="GO:0005743">
    <property type="term" value="C:mitochondrial inner membrane"/>
    <property type="evidence" value="ECO:0007669"/>
    <property type="project" value="TreeGrafter"/>
</dbReference>
<dbReference type="GO" id="GO:0005886">
    <property type="term" value="C:plasma membrane"/>
    <property type="evidence" value="ECO:0007669"/>
    <property type="project" value="UniProtKB-SubCell"/>
</dbReference>
<dbReference type="GO" id="GO:0015421">
    <property type="term" value="F:ABC-type oligopeptide transporter activity"/>
    <property type="evidence" value="ECO:0007669"/>
    <property type="project" value="TreeGrafter"/>
</dbReference>
<dbReference type="GO" id="GO:0005524">
    <property type="term" value="F:ATP binding"/>
    <property type="evidence" value="ECO:0007669"/>
    <property type="project" value="UniProtKB-KW"/>
</dbReference>
<dbReference type="GO" id="GO:0016887">
    <property type="term" value="F:ATP hydrolysis activity"/>
    <property type="evidence" value="ECO:0007669"/>
    <property type="project" value="InterPro"/>
</dbReference>
<dbReference type="GO" id="GO:0090374">
    <property type="term" value="P:oligopeptide export from mitochondrion"/>
    <property type="evidence" value="ECO:0007669"/>
    <property type="project" value="TreeGrafter"/>
</dbReference>
<dbReference type="CDD" id="cd18577">
    <property type="entry name" value="ABC_6TM_Pgp_ABCB1_D1_like"/>
    <property type="match status" value="1"/>
</dbReference>
<dbReference type="CDD" id="cd18578">
    <property type="entry name" value="ABC_6TM_Pgp_ABCB1_D2_like"/>
    <property type="match status" value="1"/>
</dbReference>
<dbReference type="CDD" id="cd03249">
    <property type="entry name" value="ABC_MTABC3_MDL1_MDL2"/>
    <property type="match status" value="2"/>
</dbReference>
<dbReference type="FunFam" id="1.20.1560.10:FF:000057">
    <property type="entry name" value="ABC multidrug transporter SitT"/>
    <property type="match status" value="1"/>
</dbReference>
<dbReference type="FunFam" id="3.40.50.300:FF:000913">
    <property type="entry name" value="ABC multidrug transporter SitT"/>
    <property type="match status" value="1"/>
</dbReference>
<dbReference type="FunFam" id="3.40.50.300:FF:000251">
    <property type="entry name" value="ABC transporter B family member 19"/>
    <property type="match status" value="1"/>
</dbReference>
<dbReference type="Gene3D" id="1.20.1560.10">
    <property type="entry name" value="ABC transporter type 1, transmembrane domain"/>
    <property type="match status" value="1"/>
</dbReference>
<dbReference type="Gene3D" id="3.40.50.300">
    <property type="entry name" value="P-loop containing nucleotide triphosphate hydrolases"/>
    <property type="match status" value="2"/>
</dbReference>
<dbReference type="InterPro" id="IPR003593">
    <property type="entry name" value="AAA+_ATPase"/>
</dbReference>
<dbReference type="InterPro" id="IPR011527">
    <property type="entry name" value="ABC1_TM_dom"/>
</dbReference>
<dbReference type="InterPro" id="IPR036640">
    <property type="entry name" value="ABC1_TM_sf"/>
</dbReference>
<dbReference type="InterPro" id="IPR003439">
    <property type="entry name" value="ABC_transporter-like_ATP-bd"/>
</dbReference>
<dbReference type="InterPro" id="IPR017871">
    <property type="entry name" value="ABC_transporter-like_CS"/>
</dbReference>
<dbReference type="InterPro" id="IPR027417">
    <property type="entry name" value="P-loop_NTPase"/>
</dbReference>
<dbReference type="InterPro" id="IPR039421">
    <property type="entry name" value="Type_1_exporter"/>
</dbReference>
<dbReference type="PANTHER" id="PTHR43394">
    <property type="entry name" value="ATP-DEPENDENT PERMEASE MDL1, MITOCHONDRIAL"/>
    <property type="match status" value="1"/>
</dbReference>
<dbReference type="PANTHER" id="PTHR43394:SF27">
    <property type="entry name" value="ATP-DEPENDENT TRANSLOCASE ABCB1-LIKE"/>
    <property type="match status" value="1"/>
</dbReference>
<dbReference type="Pfam" id="PF00664">
    <property type="entry name" value="ABC_membrane"/>
    <property type="match status" value="2"/>
</dbReference>
<dbReference type="Pfam" id="PF00005">
    <property type="entry name" value="ABC_tran"/>
    <property type="match status" value="2"/>
</dbReference>
<dbReference type="SMART" id="SM00382">
    <property type="entry name" value="AAA"/>
    <property type="match status" value="2"/>
</dbReference>
<dbReference type="SUPFAM" id="SSF90123">
    <property type="entry name" value="ABC transporter transmembrane region"/>
    <property type="match status" value="2"/>
</dbReference>
<dbReference type="SUPFAM" id="SSF52540">
    <property type="entry name" value="P-loop containing nucleoside triphosphate hydrolases"/>
    <property type="match status" value="2"/>
</dbReference>
<dbReference type="PROSITE" id="PS50929">
    <property type="entry name" value="ABC_TM1F"/>
    <property type="match status" value="2"/>
</dbReference>
<dbReference type="PROSITE" id="PS00211">
    <property type="entry name" value="ABC_TRANSPORTER_1"/>
    <property type="match status" value="1"/>
</dbReference>
<dbReference type="PROSITE" id="PS50893">
    <property type="entry name" value="ABC_TRANSPORTER_2"/>
    <property type="match status" value="2"/>
</dbReference>
<accession>F2SQT8</accession>
<organism>
    <name type="scientific">Trichophyton rubrum (strain ATCC MYA-4607 / CBS 118892)</name>
    <name type="common">Athlete's foot fungus</name>
    <dbReference type="NCBI Taxonomy" id="559305"/>
    <lineage>
        <taxon>Eukaryota</taxon>
        <taxon>Fungi</taxon>
        <taxon>Dikarya</taxon>
        <taxon>Ascomycota</taxon>
        <taxon>Pezizomycotina</taxon>
        <taxon>Eurotiomycetes</taxon>
        <taxon>Eurotiomycetidae</taxon>
        <taxon>Onygenales</taxon>
        <taxon>Arthrodermataceae</taxon>
        <taxon>Trichophyton</taxon>
    </lineage>
</organism>
<proteinExistence type="evidence at protein level"/>
<name>MDR5_TRIRC</name>
<reference key="1">
    <citation type="journal article" date="2012" name="MBio">
        <title>Comparative genome analysis of Trichophyton rubrum and related dermatophytes reveals candidate genes involved in infection.</title>
        <authorList>
            <person name="Martinez D.A."/>
            <person name="Oliver B.G."/>
            <person name="Graeser Y."/>
            <person name="Goldberg J.M."/>
            <person name="Li W."/>
            <person name="Martinez-Rossi N.M."/>
            <person name="Monod M."/>
            <person name="Shelest E."/>
            <person name="Barton R.C."/>
            <person name="Birch E."/>
            <person name="Brakhage A.A."/>
            <person name="Chen Z."/>
            <person name="Gurr S.J."/>
            <person name="Heiman D."/>
            <person name="Heitman J."/>
            <person name="Kosti I."/>
            <person name="Rossi A."/>
            <person name="Saif S."/>
            <person name="Samalova M."/>
            <person name="Saunders C.W."/>
            <person name="Shea T."/>
            <person name="Summerbell R.C."/>
            <person name="Xu J."/>
            <person name="Young S."/>
            <person name="Zeng Q."/>
            <person name="Birren B.W."/>
            <person name="Cuomo C.A."/>
            <person name="White T.C."/>
        </authorList>
    </citation>
    <scope>NUCLEOTIDE SEQUENCE [LARGE SCALE GENOMIC DNA]</scope>
    <source>
        <strain>ATCC MYA-4607 / CBS 118892</strain>
    </source>
</reference>
<reference key="2">
    <citation type="journal article" date="2019" name="Antimicrob. Agents Chemother.">
        <title>Trichophyton rubrum azole resistance mediated by a new ABC transporter, TruMDR3.</title>
        <authorList>
            <person name="Monod M."/>
            <person name="Feuermann M."/>
            <person name="Salamin K."/>
            <person name="Fratti M."/>
            <person name="Makino M."/>
            <person name="Alshahni M.M."/>
            <person name="Makimura K."/>
            <person name="Yamada T."/>
        </authorList>
    </citation>
    <scope>IDENTIFICATION</scope>
    <scope>GENE MODEL REVISION</scope>
    <scope>FUNCTION</scope>
    <scope>INDUCTION</scope>
    <scope>CATALYTIC ACTIVITY</scope>
</reference>
<feature type="chain" id="PRO_0000448445" description="ABC multidrug transporter MDR5">
    <location>
        <begin position="1"/>
        <end position="1292"/>
    </location>
</feature>
<feature type="transmembrane region" description="Helical" evidence="1 3">
    <location>
        <begin position="79"/>
        <end position="99"/>
    </location>
</feature>
<feature type="transmembrane region" description="Helical" evidence="1 3">
    <location>
        <begin position="128"/>
        <end position="148"/>
    </location>
</feature>
<feature type="transmembrane region" description="Helical" evidence="1 3">
    <location>
        <begin position="202"/>
        <end position="222"/>
    </location>
</feature>
<feature type="transmembrane region" description="Helical" evidence="1 3">
    <location>
        <begin position="226"/>
        <end position="246"/>
    </location>
</feature>
<feature type="transmembrane region" description="Helical" evidence="1 3">
    <location>
        <begin position="314"/>
        <end position="334"/>
    </location>
</feature>
<feature type="transmembrane region" description="Helical" evidence="1 3">
    <location>
        <begin position="344"/>
        <end position="364"/>
    </location>
</feature>
<feature type="transmembrane region" description="Helical" evidence="1 3">
    <location>
        <begin position="720"/>
        <end position="740"/>
    </location>
</feature>
<feature type="transmembrane region" description="Helical" evidence="1 3">
    <location>
        <begin position="768"/>
        <end position="788"/>
    </location>
</feature>
<feature type="transmembrane region" description="Helical" evidence="1 3">
    <location>
        <begin position="844"/>
        <end position="864"/>
    </location>
</feature>
<feature type="transmembrane region" description="Helical" evidence="1 3">
    <location>
        <begin position="866"/>
        <end position="886"/>
    </location>
</feature>
<feature type="transmembrane region" description="Helical" evidence="1 3">
    <location>
        <begin position="949"/>
        <end position="969"/>
    </location>
</feature>
<feature type="transmembrane region" description="Helical" evidence="1 3">
    <location>
        <begin position="986"/>
        <end position="1006"/>
    </location>
</feature>
<feature type="domain" description="ABC transmembrane type-1 1" evidence="3">
    <location>
        <begin position="81"/>
        <end position="370"/>
    </location>
</feature>
<feature type="domain" description="ABC transporter 1" evidence="2">
    <location>
        <begin position="405"/>
        <end position="650"/>
    </location>
</feature>
<feature type="domain" description="ABC transmembrane type-1 2" evidence="3">
    <location>
        <begin position="725"/>
        <end position="1012"/>
    </location>
</feature>
<feature type="domain" description="ABC transporter 2" evidence="2">
    <location>
        <begin position="1048"/>
        <end position="1285"/>
    </location>
</feature>
<feature type="region of interest" description="Disordered" evidence="5">
    <location>
        <begin position="1"/>
        <end position="43"/>
    </location>
</feature>
<feature type="region of interest" description="Disordered" evidence="5">
    <location>
        <begin position="656"/>
        <end position="691"/>
    </location>
</feature>
<feature type="compositionally biased region" description="Basic and acidic residues" evidence="5">
    <location>
        <begin position="663"/>
        <end position="680"/>
    </location>
</feature>
<feature type="binding site" evidence="2">
    <location>
        <begin position="440"/>
        <end position="447"/>
    </location>
    <ligand>
        <name>ATP</name>
        <dbReference type="ChEBI" id="CHEBI:30616"/>
    </ligand>
</feature>
<feature type="binding site" evidence="2">
    <location>
        <begin position="1083"/>
        <end position="1090"/>
    </location>
    <ligand>
        <name>ATP</name>
        <dbReference type="ChEBI" id="CHEBI:30616"/>
    </ligand>
</feature>
<feature type="glycosylation site" description="N-linked (GlcNAc...) asparagine" evidence="4">
    <location>
        <position position="149"/>
    </location>
</feature>
<feature type="glycosylation site" description="N-linked (GlcNAc...) asparagine" evidence="4">
    <location>
        <position position="494"/>
    </location>
</feature>
<feature type="glycosylation site" description="N-linked (GlcNAc...) asparagine" evidence="4">
    <location>
        <position position="820"/>
    </location>
</feature>
<feature type="glycosylation site" description="N-linked (GlcNAc...) asparagine" evidence="4">
    <location>
        <position position="1009"/>
    </location>
</feature>
<feature type="glycosylation site" description="N-linked (GlcNAc...) asparagine" evidence="4">
    <location>
        <position position="1031"/>
    </location>
</feature>
<feature type="glycosylation site" description="N-linked (GlcNAc...) asparagine" evidence="4">
    <location>
        <position position="1052"/>
    </location>
</feature>